<comment type="subcellular location">
    <subcellularLocation>
        <location evidence="2">Host cytoplasm</location>
    </subcellularLocation>
</comment>
<comment type="induction">
    <text evidence="1">Expressed in the early phase of the viral replicative cycle. Expression of early genes is repressed by viral Repc (latency) and favored by viral Ner protein.</text>
</comment>
<organismHost>
    <name type="scientific">Enterobacteriaceae</name>
    <dbReference type="NCBI Taxonomy" id="543"/>
</organismHost>
<keyword id="KW-0244">Early protein</keyword>
<keyword id="KW-1035">Host cytoplasm</keyword>
<keyword id="KW-1185">Reference proteome</keyword>
<gene>
    <name type="ordered locus">Mup08</name>
</gene>
<sequence length="139" mass="16311">MNVKIRNEIQALIRIQERNNNGGELREFICAREVDGYGEKTYLITFDHYSICARYCGESISRAIASGDAFNVDLWEYVMDREYICASDPEAREMWQRIWRDYRLMAKGWARCCYSSLALKAVQLSLRHIPASLREPLLY</sequence>
<evidence type="ECO:0000269" key="1">
    <source>
    </source>
</evidence>
<evidence type="ECO:0000305" key="2"/>
<accession>Q38480</accession>
<proteinExistence type="evidence at transcript level"/>
<feature type="chain" id="PRO_0000077804" description="Uncharacterized protein gp8">
    <location>
        <begin position="1"/>
        <end position="139"/>
    </location>
</feature>
<protein>
    <recommendedName>
        <fullName>Uncharacterized protein gp8</fullName>
    </recommendedName>
    <alternativeName>
        <fullName>E7</fullName>
    </alternativeName>
    <alternativeName>
        <fullName>Gene product 8</fullName>
        <shortName>gp8</shortName>
    </alternativeName>
</protein>
<reference key="1">
    <citation type="book" date="1987" name="Phage Mu">
        <title>Sequence of the left end of Mu.</title>
        <editorList>
            <person name="Symonds N."/>
            <person name="Toussaint A."/>
            <person name="van de Putte P."/>
            <person name="Howe M.M."/>
        </editorList>
        <authorList>
            <person name="Priess H."/>
            <person name="Brauer B."/>
            <person name="Schmidt C."/>
            <person name="Kamp D."/>
        </authorList>
    </citation>
    <scope>NUCLEOTIDE SEQUENCE [GENOMIC DNA]</scope>
</reference>
<reference key="2">
    <citation type="journal article" date="2002" name="J. Mol. Biol.">
        <title>Bacteriophage Mu genome sequence: analysis and comparison with Mu-like prophages in Haemophilus, Neisseria and Deinococcus.</title>
        <authorList>
            <person name="Morgan G.J."/>
            <person name="Hatfull G.F."/>
            <person name="Casjens S."/>
            <person name="Hendrix R.W."/>
        </authorList>
    </citation>
    <scope>NUCLEOTIDE SEQUENCE [LARGE SCALE GENOMIC DNA]</scope>
</reference>
<reference key="3">
    <citation type="journal article" date="1989" name="J. Bacteriol.">
        <title>Localization and regulation of bacteriophage Mu promoters.</title>
        <authorList>
            <person name="Stoddard S.F."/>
            <person name="Howe M.M."/>
        </authorList>
    </citation>
    <scope>INDUCTION</scope>
</reference>
<name>GP8_BPMU</name>
<organism>
    <name type="scientific">Escherichia phage Mu</name>
    <name type="common">Bacteriophage Mu</name>
    <dbReference type="NCBI Taxonomy" id="2681603"/>
    <lineage>
        <taxon>Viruses</taxon>
        <taxon>Duplodnaviria</taxon>
        <taxon>Heunggongvirae</taxon>
        <taxon>Uroviricota</taxon>
        <taxon>Caudoviricetes</taxon>
        <taxon>Muvirus</taxon>
        <taxon>Muvirus mu</taxon>
    </lineage>
</organism>
<dbReference type="EMBL" id="M64097">
    <property type="protein sequence ID" value="AAA32391.1"/>
    <property type="molecule type" value="Genomic_DNA"/>
</dbReference>
<dbReference type="EMBL" id="AF083977">
    <property type="protein sequence ID" value="AAF01134.1"/>
    <property type="molecule type" value="Genomic_DNA"/>
</dbReference>
<dbReference type="RefSeq" id="NP_050612.1">
    <property type="nucleotide sequence ID" value="NC_000929.1"/>
</dbReference>
<dbReference type="GeneID" id="2636279"/>
<dbReference type="KEGG" id="vg:2636279"/>
<dbReference type="Proteomes" id="UP000002611">
    <property type="component" value="Genome"/>
</dbReference>
<dbReference type="Proteomes" id="UP000401936">
    <property type="component" value="Segment"/>
</dbReference>
<dbReference type="GO" id="GO:0030430">
    <property type="term" value="C:host cell cytoplasm"/>
    <property type="evidence" value="ECO:0007669"/>
    <property type="project" value="UniProtKB-SubCell"/>
</dbReference>